<reference key="1">
    <citation type="journal article" date="2008" name="J. Bacteriol.">
        <title>Comparative genome sequence analysis of multidrug-resistant Acinetobacter baumannii.</title>
        <authorList>
            <person name="Adams M.D."/>
            <person name="Goglin K."/>
            <person name="Molyneaux N."/>
            <person name="Hujer K.M."/>
            <person name="Lavender H."/>
            <person name="Jamison J.J."/>
            <person name="MacDonald I.J."/>
            <person name="Martin K.M."/>
            <person name="Russo T."/>
            <person name="Campagnari A.A."/>
            <person name="Hujer A.M."/>
            <person name="Bonomo R.A."/>
            <person name="Gill S.R."/>
        </authorList>
    </citation>
    <scope>NUCLEOTIDE SEQUENCE [LARGE SCALE GENOMIC DNA]</scope>
    <source>
        <strain>AB0057</strain>
    </source>
</reference>
<organism>
    <name type="scientific">Acinetobacter baumannii (strain AB0057)</name>
    <dbReference type="NCBI Taxonomy" id="480119"/>
    <lineage>
        <taxon>Bacteria</taxon>
        <taxon>Pseudomonadati</taxon>
        <taxon>Pseudomonadota</taxon>
        <taxon>Gammaproteobacteria</taxon>
        <taxon>Moraxellales</taxon>
        <taxon>Moraxellaceae</taxon>
        <taxon>Acinetobacter</taxon>
        <taxon>Acinetobacter calcoaceticus/baumannii complex</taxon>
    </lineage>
</organism>
<keyword id="KW-0418">Kinase</keyword>
<keyword id="KW-0547">Nucleotide-binding</keyword>
<keyword id="KW-0723">Serine/threonine-protein kinase</keyword>
<keyword id="KW-0808">Transferase</keyword>
<dbReference type="EC" id="2.7.11.33" evidence="1"/>
<dbReference type="EC" id="2.7.4.28" evidence="1"/>
<dbReference type="EMBL" id="CP001182">
    <property type="protein sequence ID" value="ACJ42610.1"/>
    <property type="molecule type" value="Genomic_DNA"/>
</dbReference>
<dbReference type="RefSeq" id="WP_000004354.1">
    <property type="nucleotide sequence ID" value="NC_011586.2"/>
</dbReference>
<dbReference type="SMR" id="B7IBB3"/>
<dbReference type="KEGG" id="abn:AB57_2500"/>
<dbReference type="HOGENOM" id="CLU_046206_1_0_6"/>
<dbReference type="Proteomes" id="UP000007094">
    <property type="component" value="Chromosome"/>
</dbReference>
<dbReference type="GO" id="GO:0043531">
    <property type="term" value="F:ADP binding"/>
    <property type="evidence" value="ECO:0007669"/>
    <property type="project" value="UniProtKB-UniRule"/>
</dbReference>
<dbReference type="GO" id="GO:0005524">
    <property type="term" value="F:ATP binding"/>
    <property type="evidence" value="ECO:0007669"/>
    <property type="project" value="InterPro"/>
</dbReference>
<dbReference type="GO" id="GO:0016776">
    <property type="term" value="F:phosphotransferase activity, phosphate group as acceptor"/>
    <property type="evidence" value="ECO:0007669"/>
    <property type="project" value="UniProtKB-UniRule"/>
</dbReference>
<dbReference type="GO" id="GO:0004674">
    <property type="term" value="F:protein serine/threonine kinase activity"/>
    <property type="evidence" value="ECO:0007669"/>
    <property type="project" value="UniProtKB-UniRule"/>
</dbReference>
<dbReference type="HAMAP" id="MF_01062">
    <property type="entry name" value="PSRP"/>
    <property type="match status" value="1"/>
</dbReference>
<dbReference type="InterPro" id="IPR005177">
    <property type="entry name" value="Kinase-pyrophosphorylase"/>
</dbReference>
<dbReference type="InterPro" id="IPR026530">
    <property type="entry name" value="PSRP"/>
</dbReference>
<dbReference type="NCBIfam" id="NF003742">
    <property type="entry name" value="PRK05339.1"/>
    <property type="match status" value="1"/>
</dbReference>
<dbReference type="PANTHER" id="PTHR31756">
    <property type="entry name" value="PYRUVATE, PHOSPHATE DIKINASE REGULATORY PROTEIN 1, CHLOROPLASTIC"/>
    <property type="match status" value="1"/>
</dbReference>
<dbReference type="PANTHER" id="PTHR31756:SF3">
    <property type="entry name" value="PYRUVATE, PHOSPHATE DIKINASE REGULATORY PROTEIN 1, CHLOROPLASTIC"/>
    <property type="match status" value="1"/>
</dbReference>
<dbReference type="Pfam" id="PF03618">
    <property type="entry name" value="Kinase-PPPase"/>
    <property type="match status" value="1"/>
</dbReference>
<sequence>MSESKQFKRSVFFISDGTAITAETLGHSLLAQFPNVDFDIHIMPYITTEEAAMAVVVEINKCQTRDGCLPLVFDTLVDPHVREIINTAKAVNLDVFEGLISKLEQELGTPPTTLVGQTHAVTDSEYYKARIDAVHFALDNDDGARTRHYDKADLILIGVSRSGKTPTSIYLSLQFGIRVANYPLTEEDLDDNRLPAVLREHRSKLFGLMIDAERLVAIRSERKANSRYASFSQCQMELRAIEGIYISEGIKYLNVTEMSIEEISTRILQMTGLKRRIG</sequence>
<comment type="function">
    <text evidence="1">Bifunctional serine/threonine kinase and phosphorylase involved in the regulation of the phosphoenolpyruvate synthase (PEPS) by catalyzing its phosphorylation/dephosphorylation.</text>
</comment>
<comment type="catalytic activity">
    <reaction evidence="1">
        <text>[pyruvate, water dikinase] + ADP = [pyruvate, water dikinase]-phosphate + AMP + H(+)</text>
        <dbReference type="Rhea" id="RHEA:46020"/>
        <dbReference type="Rhea" id="RHEA-COMP:11425"/>
        <dbReference type="Rhea" id="RHEA-COMP:11426"/>
        <dbReference type="ChEBI" id="CHEBI:15378"/>
        <dbReference type="ChEBI" id="CHEBI:43176"/>
        <dbReference type="ChEBI" id="CHEBI:68546"/>
        <dbReference type="ChEBI" id="CHEBI:456215"/>
        <dbReference type="ChEBI" id="CHEBI:456216"/>
        <dbReference type="EC" id="2.7.11.33"/>
    </reaction>
</comment>
<comment type="catalytic activity">
    <reaction evidence="1">
        <text>[pyruvate, water dikinase]-phosphate + phosphate + H(+) = [pyruvate, water dikinase] + diphosphate</text>
        <dbReference type="Rhea" id="RHEA:48580"/>
        <dbReference type="Rhea" id="RHEA-COMP:11425"/>
        <dbReference type="Rhea" id="RHEA-COMP:11426"/>
        <dbReference type="ChEBI" id="CHEBI:15378"/>
        <dbReference type="ChEBI" id="CHEBI:33019"/>
        <dbReference type="ChEBI" id="CHEBI:43176"/>
        <dbReference type="ChEBI" id="CHEBI:43474"/>
        <dbReference type="ChEBI" id="CHEBI:68546"/>
        <dbReference type="EC" id="2.7.4.28"/>
    </reaction>
</comment>
<comment type="similarity">
    <text evidence="1">Belongs to the pyruvate, phosphate/water dikinase regulatory protein family. PSRP subfamily.</text>
</comment>
<proteinExistence type="inferred from homology"/>
<evidence type="ECO:0000255" key="1">
    <source>
        <dbReference type="HAMAP-Rule" id="MF_01062"/>
    </source>
</evidence>
<protein>
    <recommendedName>
        <fullName evidence="1">Putative phosphoenolpyruvate synthase regulatory protein</fullName>
        <shortName evidence="1">PEP synthase regulatory protein</shortName>
        <shortName evidence="1">PSRP</shortName>
        <ecNumber evidence="1">2.7.11.33</ecNumber>
        <ecNumber evidence="1">2.7.4.28</ecNumber>
    </recommendedName>
    <alternativeName>
        <fullName evidence="1">Pyruvate, water dikinase regulatory protein</fullName>
    </alternativeName>
</protein>
<name>PSRP_ACIB5</name>
<gene>
    <name type="ordered locus">AB57_2500</name>
</gene>
<feature type="chain" id="PRO_1000136447" description="Putative phosphoenolpyruvate synthase regulatory protein">
    <location>
        <begin position="1"/>
        <end position="278"/>
    </location>
</feature>
<feature type="binding site" evidence="1">
    <location>
        <begin position="158"/>
        <end position="165"/>
    </location>
    <ligand>
        <name>ADP</name>
        <dbReference type="ChEBI" id="CHEBI:456216"/>
    </ligand>
</feature>
<accession>B7IBB3</accession>